<dbReference type="EC" id="3.5.4.16" evidence="2"/>
<dbReference type="EMBL" id="CP000001">
    <property type="protein sequence ID" value="AAU18857.1"/>
    <property type="molecule type" value="Genomic_DNA"/>
</dbReference>
<dbReference type="RefSeq" id="WP_001151482.1">
    <property type="nucleotide sequence ID" value="NZ_CP009968.1"/>
</dbReference>
<dbReference type="SMR" id="Q63DM1"/>
<dbReference type="GeneID" id="93009529"/>
<dbReference type="KEGG" id="bcz:BCE33L1393"/>
<dbReference type="PATRIC" id="fig|288681.22.peg.4159"/>
<dbReference type="UniPathway" id="UPA00848">
    <property type="reaction ID" value="UER00151"/>
</dbReference>
<dbReference type="Proteomes" id="UP000002612">
    <property type="component" value="Chromosome"/>
</dbReference>
<dbReference type="GO" id="GO:0005737">
    <property type="term" value="C:cytoplasm"/>
    <property type="evidence" value="ECO:0007669"/>
    <property type="project" value="TreeGrafter"/>
</dbReference>
<dbReference type="GO" id="GO:0005525">
    <property type="term" value="F:GTP binding"/>
    <property type="evidence" value="ECO:0007669"/>
    <property type="project" value="UniProtKB-KW"/>
</dbReference>
<dbReference type="GO" id="GO:0003934">
    <property type="term" value="F:GTP cyclohydrolase I activity"/>
    <property type="evidence" value="ECO:0007669"/>
    <property type="project" value="UniProtKB-UniRule"/>
</dbReference>
<dbReference type="GO" id="GO:0008270">
    <property type="term" value="F:zinc ion binding"/>
    <property type="evidence" value="ECO:0007669"/>
    <property type="project" value="UniProtKB-UniRule"/>
</dbReference>
<dbReference type="GO" id="GO:0006730">
    <property type="term" value="P:one-carbon metabolic process"/>
    <property type="evidence" value="ECO:0007669"/>
    <property type="project" value="UniProtKB-UniRule"/>
</dbReference>
<dbReference type="GO" id="GO:0006729">
    <property type="term" value="P:tetrahydrobiopterin biosynthetic process"/>
    <property type="evidence" value="ECO:0007669"/>
    <property type="project" value="TreeGrafter"/>
</dbReference>
<dbReference type="GO" id="GO:0046654">
    <property type="term" value="P:tetrahydrofolate biosynthetic process"/>
    <property type="evidence" value="ECO:0007669"/>
    <property type="project" value="UniProtKB-UniRule"/>
</dbReference>
<dbReference type="CDD" id="cd00642">
    <property type="entry name" value="GTP_cyclohydro1"/>
    <property type="match status" value="1"/>
</dbReference>
<dbReference type="FunFam" id="1.10.286.10:FF:000001">
    <property type="entry name" value="GTP cyclohydrolase 1"/>
    <property type="match status" value="1"/>
</dbReference>
<dbReference type="FunFam" id="3.30.1130.10:FF:000001">
    <property type="entry name" value="GTP cyclohydrolase 1"/>
    <property type="match status" value="1"/>
</dbReference>
<dbReference type="Gene3D" id="1.10.286.10">
    <property type="match status" value="1"/>
</dbReference>
<dbReference type="Gene3D" id="3.30.1130.10">
    <property type="match status" value="1"/>
</dbReference>
<dbReference type="HAMAP" id="MF_00223">
    <property type="entry name" value="FolE"/>
    <property type="match status" value="1"/>
</dbReference>
<dbReference type="InterPro" id="IPR043133">
    <property type="entry name" value="GTP-CH-I_C/QueF"/>
</dbReference>
<dbReference type="InterPro" id="IPR043134">
    <property type="entry name" value="GTP-CH-I_N"/>
</dbReference>
<dbReference type="InterPro" id="IPR001474">
    <property type="entry name" value="GTP_CycHdrlase_I"/>
</dbReference>
<dbReference type="InterPro" id="IPR018234">
    <property type="entry name" value="GTP_CycHdrlase_I_CS"/>
</dbReference>
<dbReference type="InterPro" id="IPR020602">
    <property type="entry name" value="GTP_CycHdrlase_I_dom"/>
</dbReference>
<dbReference type="NCBIfam" id="TIGR00063">
    <property type="entry name" value="folE"/>
    <property type="match status" value="1"/>
</dbReference>
<dbReference type="NCBIfam" id="NF006825">
    <property type="entry name" value="PRK09347.1-2"/>
    <property type="match status" value="1"/>
</dbReference>
<dbReference type="NCBIfam" id="NF006826">
    <property type="entry name" value="PRK09347.1-3"/>
    <property type="match status" value="1"/>
</dbReference>
<dbReference type="PANTHER" id="PTHR11109:SF7">
    <property type="entry name" value="GTP CYCLOHYDROLASE 1"/>
    <property type="match status" value="1"/>
</dbReference>
<dbReference type="PANTHER" id="PTHR11109">
    <property type="entry name" value="GTP CYCLOHYDROLASE I"/>
    <property type="match status" value="1"/>
</dbReference>
<dbReference type="Pfam" id="PF01227">
    <property type="entry name" value="GTP_cyclohydroI"/>
    <property type="match status" value="1"/>
</dbReference>
<dbReference type="SUPFAM" id="SSF55620">
    <property type="entry name" value="Tetrahydrobiopterin biosynthesis enzymes-like"/>
    <property type="match status" value="1"/>
</dbReference>
<dbReference type="PROSITE" id="PS00859">
    <property type="entry name" value="GTP_CYCLOHYDROL_1_1"/>
    <property type="match status" value="1"/>
</dbReference>
<dbReference type="PROSITE" id="PS00860">
    <property type="entry name" value="GTP_CYCLOHYDROL_1_2"/>
    <property type="match status" value="1"/>
</dbReference>
<keyword id="KW-0342">GTP-binding</keyword>
<keyword id="KW-0378">Hydrolase</keyword>
<keyword id="KW-0479">Metal-binding</keyword>
<keyword id="KW-0547">Nucleotide-binding</keyword>
<keyword id="KW-0554">One-carbon metabolism</keyword>
<keyword id="KW-0862">Zinc</keyword>
<organism>
    <name type="scientific">Bacillus cereus (strain ZK / E33L)</name>
    <dbReference type="NCBI Taxonomy" id="288681"/>
    <lineage>
        <taxon>Bacteria</taxon>
        <taxon>Bacillati</taxon>
        <taxon>Bacillota</taxon>
        <taxon>Bacilli</taxon>
        <taxon>Bacillales</taxon>
        <taxon>Bacillaceae</taxon>
        <taxon>Bacillus</taxon>
        <taxon>Bacillus cereus group</taxon>
    </lineage>
</organism>
<comment type="catalytic activity">
    <reaction evidence="2">
        <text>GTP + H2O = 7,8-dihydroneopterin 3'-triphosphate + formate + H(+)</text>
        <dbReference type="Rhea" id="RHEA:17473"/>
        <dbReference type="ChEBI" id="CHEBI:15377"/>
        <dbReference type="ChEBI" id="CHEBI:15378"/>
        <dbReference type="ChEBI" id="CHEBI:15740"/>
        <dbReference type="ChEBI" id="CHEBI:37565"/>
        <dbReference type="ChEBI" id="CHEBI:58462"/>
        <dbReference type="EC" id="3.5.4.16"/>
    </reaction>
</comment>
<comment type="pathway">
    <text evidence="2">Cofactor biosynthesis; 7,8-dihydroneopterin triphosphate biosynthesis; 7,8-dihydroneopterin triphosphate from GTP: step 1/1.</text>
</comment>
<comment type="subunit">
    <text evidence="1">Toroid-shaped homodecamer, composed of two pentamers of five dimers.</text>
</comment>
<comment type="similarity">
    <text evidence="2">Belongs to the GTP cyclohydrolase I family.</text>
</comment>
<protein>
    <recommendedName>
        <fullName evidence="2">GTP cyclohydrolase 1</fullName>
        <ecNumber evidence="2">3.5.4.16</ecNumber>
    </recommendedName>
    <alternativeName>
        <fullName evidence="2">GTP cyclohydrolase I</fullName>
        <shortName evidence="2">GTP-CH-I</shortName>
    </alternativeName>
</protein>
<sequence>MAKVNLEQIEHAVRLILEAIGDDPNREGVLDTPKRVAKMYAEVFSGMHEDPKEHLHKVFGEDHEELVLVKDIPFYSMCEHHLVPFYGVAHVAYIPQGGKVTGLSKLARTVDTIARRPQLQERITSTVANSIMEVLEPHGVMVVVEAEHMCMTMRGVKKPGAKTVTTAVRGVLENDAAARSEILSFIKTK</sequence>
<evidence type="ECO:0000250" key="1"/>
<evidence type="ECO:0000255" key="2">
    <source>
        <dbReference type="HAMAP-Rule" id="MF_00223"/>
    </source>
</evidence>
<accession>Q63DM1</accession>
<reference key="1">
    <citation type="journal article" date="2006" name="J. Bacteriol.">
        <title>Pathogenomic sequence analysis of Bacillus cereus and Bacillus thuringiensis isolates closely related to Bacillus anthracis.</title>
        <authorList>
            <person name="Han C.S."/>
            <person name="Xie G."/>
            <person name="Challacombe J.F."/>
            <person name="Altherr M.R."/>
            <person name="Bhotika S.S."/>
            <person name="Bruce D."/>
            <person name="Campbell C.S."/>
            <person name="Campbell M.L."/>
            <person name="Chen J."/>
            <person name="Chertkov O."/>
            <person name="Cleland C."/>
            <person name="Dimitrijevic M."/>
            <person name="Doggett N.A."/>
            <person name="Fawcett J.J."/>
            <person name="Glavina T."/>
            <person name="Goodwin L.A."/>
            <person name="Hill K.K."/>
            <person name="Hitchcock P."/>
            <person name="Jackson P.J."/>
            <person name="Keim P."/>
            <person name="Kewalramani A.R."/>
            <person name="Longmire J."/>
            <person name="Lucas S."/>
            <person name="Malfatti S."/>
            <person name="McMurry K."/>
            <person name="Meincke L.J."/>
            <person name="Misra M."/>
            <person name="Moseman B.L."/>
            <person name="Mundt M."/>
            <person name="Munk A.C."/>
            <person name="Okinaka R.T."/>
            <person name="Parson-Quintana B."/>
            <person name="Reilly L.P."/>
            <person name="Richardson P."/>
            <person name="Robinson D.L."/>
            <person name="Rubin E."/>
            <person name="Saunders E."/>
            <person name="Tapia R."/>
            <person name="Tesmer J.G."/>
            <person name="Thayer N."/>
            <person name="Thompson L.S."/>
            <person name="Tice H."/>
            <person name="Ticknor L.O."/>
            <person name="Wills P.L."/>
            <person name="Brettin T.S."/>
            <person name="Gilna P."/>
        </authorList>
    </citation>
    <scope>NUCLEOTIDE SEQUENCE [LARGE SCALE GENOMIC DNA]</scope>
    <source>
        <strain>ZK / E33L</strain>
    </source>
</reference>
<proteinExistence type="inferred from homology"/>
<feature type="chain" id="PRO_1000043660" description="GTP cyclohydrolase 1">
    <location>
        <begin position="1"/>
        <end position="189"/>
    </location>
</feature>
<feature type="binding site" evidence="2">
    <location>
        <position position="78"/>
    </location>
    <ligand>
        <name>Zn(2+)</name>
        <dbReference type="ChEBI" id="CHEBI:29105"/>
    </ligand>
</feature>
<feature type="binding site" evidence="2">
    <location>
        <position position="81"/>
    </location>
    <ligand>
        <name>Zn(2+)</name>
        <dbReference type="ChEBI" id="CHEBI:29105"/>
    </ligand>
</feature>
<feature type="binding site" evidence="2">
    <location>
        <position position="150"/>
    </location>
    <ligand>
        <name>Zn(2+)</name>
        <dbReference type="ChEBI" id="CHEBI:29105"/>
    </ligand>
</feature>
<name>GCH1_BACCZ</name>
<gene>
    <name evidence="2" type="primary">folE</name>
    <name type="ordered locus">BCE33L1393</name>
</gene>